<gene>
    <name evidence="1" type="primary">tyrS</name>
    <name type="ordered locus">BURPS1710b_3412</name>
</gene>
<keyword id="KW-0030">Aminoacyl-tRNA synthetase</keyword>
<keyword id="KW-0067">ATP-binding</keyword>
<keyword id="KW-0963">Cytoplasm</keyword>
<keyword id="KW-0436">Ligase</keyword>
<keyword id="KW-0547">Nucleotide-binding</keyword>
<keyword id="KW-0648">Protein biosynthesis</keyword>
<keyword id="KW-0694">RNA-binding</keyword>
<dbReference type="EC" id="6.1.1.1" evidence="1"/>
<dbReference type="EMBL" id="CP000124">
    <property type="protein sequence ID" value="ABA49713.1"/>
    <property type="status" value="ALT_INIT"/>
    <property type="molecule type" value="Genomic_DNA"/>
</dbReference>
<dbReference type="RefSeq" id="WP_004527727.1">
    <property type="nucleotide sequence ID" value="NC_007434.1"/>
</dbReference>
<dbReference type="SMR" id="Q3JNS0"/>
<dbReference type="EnsemblBacteria" id="ABA49713">
    <property type="protein sequence ID" value="ABA49713"/>
    <property type="gene ID" value="BURPS1710b_3412"/>
</dbReference>
<dbReference type="KEGG" id="bpm:BURPS1710b_3412"/>
<dbReference type="HOGENOM" id="CLU_024003_5_0_4"/>
<dbReference type="Proteomes" id="UP000002700">
    <property type="component" value="Chromosome I"/>
</dbReference>
<dbReference type="GO" id="GO:0005829">
    <property type="term" value="C:cytosol"/>
    <property type="evidence" value="ECO:0007669"/>
    <property type="project" value="TreeGrafter"/>
</dbReference>
<dbReference type="GO" id="GO:0005524">
    <property type="term" value="F:ATP binding"/>
    <property type="evidence" value="ECO:0007669"/>
    <property type="project" value="UniProtKB-UniRule"/>
</dbReference>
<dbReference type="GO" id="GO:0003723">
    <property type="term" value="F:RNA binding"/>
    <property type="evidence" value="ECO:0007669"/>
    <property type="project" value="UniProtKB-KW"/>
</dbReference>
<dbReference type="GO" id="GO:0004831">
    <property type="term" value="F:tyrosine-tRNA ligase activity"/>
    <property type="evidence" value="ECO:0007669"/>
    <property type="project" value="UniProtKB-UniRule"/>
</dbReference>
<dbReference type="GO" id="GO:0006437">
    <property type="term" value="P:tyrosyl-tRNA aminoacylation"/>
    <property type="evidence" value="ECO:0007669"/>
    <property type="project" value="UniProtKB-UniRule"/>
</dbReference>
<dbReference type="CDD" id="cd00165">
    <property type="entry name" value="S4"/>
    <property type="match status" value="1"/>
</dbReference>
<dbReference type="CDD" id="cd00805">
    <property type="entry name" value="TyrRS_core"/>
    <property type="match status" value="1"/>
</dbReference>
<dbReference type="FunFam" id="1.10.240.10:FF:000006">
    <property type="entry name" value="Tyrosine--tRNA ligase"/>
    <property type="match status" value="1"/>
</dbReference>
<dbReference type="FunFam" id="3.10.290.10:FF:000022">
    <property type="entry name" value="Tyrosine--tRNA ligase"/>
    <property type="match status" value="1"/>
</dbReference>
<dbReference type="FunFam" id="3.40.50.620:FF:000061">
    <property type="entry name" value="Tyrosine--tRNA ligase"/>
    <property type="match status" value="1"/>
</dbReference>
<dbReference type="Gene3D" id="3.40.50.620">
    <property type="entry name" value="HUPs"/>
    <property type="match status" value="1"/>
</dbReference>
<dbReference type="Gene3D" id="3.10.290.10">
    <property type="entry name" value="RNA-binding S4 domain"/>
    <property type="match status" value="1"/>
</dbReference>
<dbReference type="Gene3D" id="1.10.240.10">
    <property type="entry name" value="Tyrosyl-Transfer RNA Synthetase"/>
    <property type="match status" value="1"/>
</dbReference>
<dbReference type="HAMAP" id="MF_02007">
    <property type="entry name" value="Tyr_tRNA_synth_type2"/>
    <property type="match status" value="1"/>
</dbReference>
<dbReference type="InterPro" id="IPR001412">
    <property type="entry name" value="aa-tRNA-synth_I_CS"/>
</dbReference>
<dbReference type="InterPro" id="IPR002305">
    <property type="entry name" value="aa-tRNA-synth_Ic"/>
</dbReference>
<dbReference type="InterPro" id="IPR014729">
    <property type="entry name" value="Rossmann-like_a/b/a_fold"/>
</dbReference>
<dbReference type="InterPro" id="IPR002942">
    <property type="entry name" value="S4_RNA-bd"/>
</dbReference>
<dbReference type="InterPro" id="IPR036986">
    <property type="entry name" value="S4_RNA-bd_sf"/>
</dbReference>
<dbReference type="InterPro" id="IPR002307">
    <property type="entry name" value="Tyr-tRNA-ligase"/>
</dbReference>
<dbReference type="InterPro" id="IPR024088">
    <property type="entry name" value="Tyr-tRNA-ligase_bac-type"/>
</dbReference>
<dbReference type="InterPro" id="IPR024108">
    <property type="entry name" value="Tyr-tRNA-ligase_bac_2"/>
</dbReference>
<dbReference type="NCBIfam" id="TIGR00234">
    <property type="entry name" value="tyrS"/>
    <property type="match status" value="1"/>
</dbReference>
<dbReference type="PANTHER" id="PTHR11766:SF1">
    <property type="entry name" value="TYROSINE--TRNA LIGASE"/>
    <property type="match status" value="1"/>
</dbReference>
<dbReference type="PANTHER" id="PTHR11766">
    <property type="entry name" value="TYROSYL-TRNA SYNTHETASE"/>
    <property type="match status" value="1"/>
</dbReference>
<dbReference type="Pfam" id="PF01479">
    <property type="entry name" value="S4"/>
    <property type="match status" value="1"/>
</dbReference>
<dbReference type="Pfam" id="PF00579">
    <property type="entry name" value="tRNA-synt_1b"/>
    <property type="match status" value="1"/>
</dbReference>
<dbReference type="PRINTS" id="PR01040">
    <property type="entry name" value="TRNASYNTHTYR"/>
</dbReference>
<dbReference type="SMART" id="SM00363">
    <property type="entry name" value="S4"/>
    <property type="match status" value="1"/>
</dbReference>
<dbReference type="SUPFAM" id="SSF55174">
    <property type="entry name" value="Alpha-L RNA-binding motif"/>
    <property type="match status" value="1"/>
</dbReference>
<dbReference type="SUPFAM" id="SSF52374">
    <property type="entry name" value="Nucleotidylyl transferase"/>
    <property type="match status" value="1"/>
</dbReference>
<dbReference type="PROSITE" id="PS00178">
    <property type="entry name" value="AA_TRNA_LIGASE_I"/>
    <property type="match status" value="1"/>
</dbReference>
<dbReference type="PROSITE" id="PS50889">
    <property type="entry name" value="S4"/>
    <property type="match status" value="1"/>
</dbReference>
<protein>
    <recommendedName>
        <fullName evidence="1">Tyrosine--tRNA ligase</fullName>
        <ecNumber evidence="1">6.1.1.1</ecNumber>
    </recommendedName>
    <alternativeName>
        <fullName evidence="1">Tyrosyl-tRNA synthetase</fullName>
        <shortName evidence="1">TyrRS</shortName>
    </alternativeName>
</protein>
<feature type="chain" id="PRO_0000236702" description="Tyrosine--tRNA ligase">
    <location>
        <begin position="1"/>
        <end position="413"/>
    </location>
</feature>
<feature type="domain" description="S4 RNA-binding" evidence="1">
    <location>
        <begin position="351"/>
        <end position="411"/>
    </location>
</feature>
<feature type="short sequence motif" description="'HIGH' region">
    <location>
        <begin position="59"/>
        <end position="68"/>
    </location>
</feature>
<feature type="short sequence motif" description="'KMSKS' region">
    <location>
        <begin position="243"/>
        <end position="247"/>
    </location>
</feature>
<feature type="binding site" evidence="1">
    <location>
        <position position="246"/>
    </location>
    <ligand>
        <name>ATP</name>
        <dbReference type="ChEBI" id="CHEBI:30616"/>
    </ligand>
</feature>
<proteinExistence type="inferred from homology"/>
<organism>
    <name type="scientific">Burkholderia pseudomallei (strain 1710b)</name>
    <dbReference type="NCBI Taxonomy" id="320372"/>
    <lineage>
        <taxon>Bacteria</taxon>
        <taxon>Pseudomonadati</taxon>
        <taxon>Pseudomonadota</taxon>
        <taxon>Betaproteobacteria</taxon>
        <taxon>Burkholderiales</taxon>
        <taxon>Burkholderiaceae</taxon>
        <taxon>Burkholderia</taxon>
        <taxon>pseudomallei group</taxon>
    </lineage>
</organism>
<sequence length="413" mass="45660">MSTDPTSKPAFPITDEVRHALAVTKRGVDELLIEEEFAQKLAKSAATDKPLRIKLGLDPTAPDIHLGHTVVLNKMRQLQDLGHTVIFLIGDFTSLIGDPSGRNATRPPLTREQIESNAKTYFEQAALVLDRAKTEIRYNSEWSMPLGADGMIKLASRYTVARMLEREDFTKRFQGGIPISIHEFLYPLMQGYDSVALNADLELGGTDQKFNLLVGRELQKQYGQEQQCILTMPLLEGLDGVEKMSKSKGNYVGISEKPTDMFGKLMSISDVLMWRYFELLSFRSLDEIARFRGEAEGGRNPRDFKVMLAQEIVARFHSQADAERALEDFNHRAKGGVPDDIPAVTLAGAPLAIGQLLKQAGLVPSTSEALRNIEQGGVKIDGATVSDKALKVDAGEFVVQVGKRRFARVTLTA</sequence>
<reference key="1">
    <citation type="journal article" date="2010" name="Genome Biol. Evol.">
        <title>Continuing evolution of Burkholderia mallei through genome reduction and large-scale rearrangements.</title>
        <authorList>
            <person name="Losada L."/>
            <person name="Ronning C.M."/>
            <person name="DeShazer D."/>
            <person name="Woods D."/>
            <person name="Fedorova N."/>
            <person name="Kim H.S."/>
            <person name="Shabalina S.A."/>
            <person name="Pearson T.R."/>
            <person name="Brinkac L."/>
            <person name="Tan P."/>
            <person name="Nandi T."/>
            <person name="Crabtree J."/>
            <person name="Badger J."/>
            <person name="Beckstrom-Sternberg S."/>
            <person name="Saqib M."/>
            <person name="Schutzer S.E."/>
            <person name="Keim P."/>
            <person name="Nierman W.C."/>
        </authorList>
    </citation>
    <scope>NUCLEOTIDE SEQUENCE [LARGE SCALE GENOMIC DNA]</scope>
    <source>
        <strain>1710b</strain>
    </source>
</reference>
<name>SYY_BURP1</name>
<comment type="function">
    <text evidence="1">Catalyzes the attachment of tyrosine to tRNA(Tyr) in a two-step reaction: tyrosine is first activated by ATP to form Tyr-AMP and then transferred to the acceptor end of tRNA(Tyr).</text>
</comment>
<comment type="catalytic activity">
    <reaction evidence="1">
        <text>tRNA(Tyr) + L-tyrosine + ATP = L-tyrosyl-tRNA(Tyr) + AMP + diphosphate + H(+)</text>
        <dbReference type="Rhea" id="RHEA:10220"/>
        <dbReference type="Rhea" id="RHEA-COMP:9706"/>
        <dbReference type="Rhea" id="RHEA-COMP:9707"/>
        <dbReference type="ChEBI" id="CHEBI:15378"/>
        <dbReference type="ChEBI" id="CHEBI:30616"/>
        <dbReference type="ChEBI" id="CHEBI:33019"/>
        <dbReference type="ChEBI" id="CHEBI:58315"/>
        <dbReference type="ChEBI" id="CHEBI:78442"/>
        <dbReference type="ChEBI" id="CHEBI:78536"/>
        <dbReference type="ChEBI" id="CHEBI:456215"/>
        <dbReference type="EC" id="6.1.1.1"/>
    </reaction>
</comment>
<comment type="subunit">
    <text evidence="1">Homodimer.</text>
</comment>
<comment type="subcellular location">
    <subcellularLocation>
        <location evidence="1">Cytoplasm</location>
    </subcellularLocation>
</comment>
<comment type="similarity">
    <text evidence="1">Belongs to the class-I aminoacyl-tRNA synthetase family. TyrS type 2 subfamily.</text>
</comment>
<comment type="sequence caution" evidence="2">
    <conflict type="erroneous initiation">
        <sequence resource="EMBL-CDS" id="ABA49713"/>
    </conflict>
</comment>
<accession>Q3JNS0</accession>
<evidence type="ECO:0000255" key="1">
    <source>
        <dbReference type="HAMAP-Rule" id="MF_02007"/>
    </source>
</evidence>
<evidence type="ECO:0000305" key="2"/>